<evidence type="ECO:0000255" key="1">
    <source>
        <dbReference type="HAMAP-Rule" id="MF_01367"/>
    </source>
</evidence>
<evidence type="ECO:0000305" key="2"/>
<accession>Q2NQN2</accession>
<gene>
    <name evidence="1" type="primary">rplN</name>
    <name type="ordered locus">SG2268</name>
</gene>
<organism>
    <name type="scientific">Sodalis glossinidius (strain morsitans)</name>
    <dbReference type="NCBI Taxonomy" id="343509"/>
    <lineage>
        <taxon>Bacteria</taxon>
        <taxon>Pseudomonadati</taxon>
        <taxon>Pseudomonadota</taxon>
        <taxon>Gammaproteobacteria</taxon>
        <taxon>Enterobacterales</taxon>
        <taxon>Bruguierivoracaceae</taxon>
        <taxon>Sodalis</taxon>
    </lineage>
</organism>
<feature type="chain" id="PRO_0000266565" description="Large ribosomal subunit protein uL14">
    <location>
        <begin position="1"/>
        <end position="123"/>
    </location>
</feature>
<name>RL14_SODGM</name>
<comment type="function">
    <text evidence="1">Binds to 23S rRNA. Forms part of two intersubunit bridges in the 70S ribosome.</text>
</comment>
<comment type="subunit">
    <text evidence="1">Part of the 50S ribosomal subunit. Forms a cluster with proteins L3 and L19. In the 70S ribosome, L14 and L19 interact and together make contacts with the 16S rRNA in bridges B5 and B8.</text>
</comment>
<comment type="similarity">
    <text evidence="1">Belongs to the universal ribosomal protein uL14 family.</text>
</comment>
<proteinExistence type="inferred from homology"/>
<sequence length="123" mass="13528">MIQEQTMLTVADNSGARRVMCIKVLGGSHRRYAGVGDIIKITIKEAIPRGKVKKGDVLKAVVVRTKKGVRRPDGSVVRFDGNACVLLNNNSEQPIGTRIFGPVTRELRTEKFMKIISLAPEVL</sequence>
<protein>
    <recommendedName>
        <fullName evidence="1">Large ribosomal subunit protein uL14</fullName>
    </recommendedName>
    <alternativeName>
        <fullName evidence="2">50S ribosomal protein L14</fullName>
    </alternativeName>
</protein>
<keyword id="KW-0687">Ribonucleoprotein</keyword>
<keyword id="KW-0689">Ribosomal protein</keyword>
<keyword id="KW-0694">RNA-binding</keyword>
<keyword id="KW-0699">rRNA-binding</keyword>
<dbReference type="EMBL" id="AP008232">
    <property type="protein sequence ID" value="BAE75543.1"/>
    <property type="molecule type" value="Genomic_DNA"/>
</dbReference>
<dbReference type="RefSeq" id="WP_011412078.1">
    <property type="nucleotide sequence ID" value="NZ_LN854557.1"/>
</dbReference>
<dbReference type="SMR" id="Q2NQN2"/>
<dbReference type="STRING" id="343509.SG2268"/>
<dbReference type="KEGG" id="sgl:SG2268"/>
<dbReference type="eggNOG" id="COG0093">
    <property type="taxonomic scope" value="Bacteria"/>
</dbReference>
<dbReference type="HOGENOM" id="CLU_095071_2_1_6"/>
<dbReference type="OrthoDB" id="9806379at2"/>
<dbReference type="BioCyc" id="SGLO343509:SGP1_RS20790-MONOMER"/>
<dbReference type="Proteomes" id="UP000001932">
    <property type="component" value="Chromosome"/>
</dbReference>
<dbReference type="GO" id="GO:0022625">
    <property type="term" value="C:cytosolic large ribosomal subunit"/>
    <property type="evidence" value="ECO:0007669"/>
    <property type="project" value="TreeGrafter"/>
</dbReference>
<dbReference type="GO" id="GO:0070180">
    <property type="term" value="F:large ribosomal subunit rRNA binding"/>
    <property type="evidence" value="ECO:0007669"/>
    <property type="project" value="TreeGrafter"/>
</dbReference>
<dbReference type="GO" id="GO:0003735">
    <property type="term" value="F:structural constituent of ribosome"/>
    <property type="evidence" value="ECO:0007669"/>
    <property type="project" value="InterPro"/>
</dbReference>
<dbReference type="GO" id="GO:0006412">
    <property type="term" value="P:translation"/>
    <property type="evidence" value="ECO:0007669"/>
    <property type="project" value="UniProtKB-UniRule"/>
</dbReference>
<dbReference type="CDD" id="cd00337">
    <property type="entry name" value="Ribosomal_uL14"/>
    <property type="match status" value="1"/>
</dbReference>
<dbReference type="FunFam" id="2.40.150.20:FF:000001">
    <property type="entry name" value="50S ribosomal protein L14"/>
    <property type="match status" value="1"/>
</dbReference>
<dbReference type="Gene3D" id="2.40.150.20">
    <property type="entry name" value="Ribosomal protein L14"/>
    <property type="match status" value="1"/>
</dbReference>
<dbReference type="HAMAP" id="MF_01367">
    <property type="entry name" value="Ribosomal_uL14"/>
    <property type="match status" value="1"/>
</dbReference>
<dbReference type="InterPro" id="IPR000218">
    <property type="entry name" value="Ribosomal_uL14"/>
</dbReference>
<dbReference type="InterPro" id="IPR005745">
    <property type="entry name" value="Ribosomal_uL14_bac-type"/>
</dbReference>
<dbReference type="InterPro" id="IPR019972">
    <property type="entry name" value="Ribosomal_uL14_CS"/>
</dbReference>
<dbReference type="InterPro" id="IPR036853">
    <property type="entry name" value="Ribosomal_uL14_sf"/>
</dbReference>
<dbReference type="NCBIfam" id="TIGR01067">
    <property type="entry name" value="rplN_bact"/>
    <property type="match status" value="1"/>
</dbReference>
<dbReference type="PANTHER" id="PTHR11761">
    <property type="entry name" value="50S/60S RIBOSOMAL PROTEIN L14/L23"/>
    <property type="match status" value="1"/>
</dbReference>
<dbReference type="PANTHER" id="PTHR11761:SF3">
    <property type="entry name" value="LARGE RIBOSOMAL SUBUNIT PROTEIN UL14M"/>
    <property type="match status" value="1"/>
</dbReference>
<dbReference type="Pfam" id="PF00238">
    <property type="entry name" value="Ribosomal_L14"/>
    <property type="match status" value="1"/>
</dbReference>
<dbReference type="SMART" id="SM01374">
    <property type="entry name" value="Ribosomal_L14"/>
    <property type="match status" value="1"/>
</dbReference>
<dbReference type="SUPFAM" id="SSF50193">
    <property type="entry name" value="Ribosomal protein L14"/>
    <property type="match status" value="1"/>
</dbReference>
<dbReference type="PROSITE" id="PS00049">
    <property type="entry name" value="RIBOSOMAL_L14"/>
    <property type="match status" value="1"/>
</dbReference>
<reference key="1">
    <citation type="journal article" date="2006" name="Genome Res.">
        <title>Massive genome erosion and functional adaptations provide insights into the symbiotic lifestyle of Sodalis glossinidius in the tsetse host.</title>
        <authorList>
            <person name="Toh H."/>
            <person name="Weiss B.L."/>
            <person name="Perkin S.A.H."/>
            <person name="Yamashita A."/>
            <person name="Oshima K."/>
            <person name="Hattori M."/>
            <person name="Aksoy S."/>
        </authorList>
    </citation>
    <scope>NUCLEOTIDE SEQUENCE [LARGE SCALE GENOMIC DNA]</scope>
    <source>
        <strain>morsitans</strain>
    </source>
</reference>